<keyword id="KW-0067">ATP-binding</keyword>
<keyword id="KW-0963">Cytoplasm</keyword>
<keyword id="KW-0436">Ligase</keyword>
<keyword id="KW-0547">Nucleotide-binding</keyword>
<keyword id="KW-0658">Purine biosynthesis</keyword>
<name>PUR5_METM7</name>
<evidence type="ECO:0000255" key="1">
    <source>
        <dbReference type="HAMAP-Rule" id="MF_00741"/>
    </source>
</evidence>
<reference key="1">
    <citation type="submission" date="2007-06" db="EMBL/GenBank/DDBJ databases">
        <title>Complete sequence of Methanococcus maripaludis C7.</title>
        <authorList>
            <consortium name="US DOE Joint Genome Institute"/>
            <person name="Copeland A."/>
            <person name="Lucas S."/>
            <person name="Lapidus A."/>
            <person name="Barry K."/>
            <person name="Glavina del Rio T."/>
            <person name="Dalin E."/>
            <person name="Tice H."/>
            <person name="Pitluck S."/>
            <person name="Clum A."/>
            <person name="Schmutz J."/>
            <person name="Larimer F."/>
            <person name="Land M."/>
            <person name="Hauser L."/>
            <person name="Kyrpides N."/>
            <person name="Anderson I."/>
            <person name="Sieprawska-Lupa M."/>
            <person name="Whitman W.B."/>
            <person name="Richardson P."/>
        </authorList>
    </citation>
    <scope>NUCLEOTIDE SEQUENCE [LARGE SCALE GENOMIC DNA]</scope>
    <source>
        <strain>C7 / ATCC BAA-1331</strain>
    </source>
</reference>
<feature type="chain" id="PRO_1000046447" description="Phosphoribosylformylglycinamidine cyclo-ligase">
    <location>
        <begin position="1"/>
        <end position="349"/>
    </location>
</feature>
<comment type="catalytic activity">
    <reaction evidence="1">
        <text>2-formamido-N(1)-(5-O-phospho-beta-D-ribosyl)acetamidine + ATP = 5-amino-1-(5-phospho-beta-D-ribosyl)imidazole + ADP + phosphate + H(+)</text>
        <dbReference type="Rhea" id="RHEA:23032"/>
        <dbReference type="ChEBI" id="CHEBI:15378"/>
        <dbReference type="ChEBI" id="CHEBI:30616"/>
        <dbReference type="ChEBI" id="CHEBI:43474"/>
        <dbReference type="ChEBI" id="CHEBI:137981"/>
        <dbReference type="ChEBI" id="CHEBI:147287"/>
        <dbReference type="ChEBI" id="CHEBI:456216"/>
        <dbReference type="EC" id="6.3.3.1"/>
    </reaction>
</comment>
<comment type="pathway">
    <text evidence="1">Purine metabolism; IMP biosynthesis via de novo pathway; 5-amino-1-(5-phospho-D-ribosyl)imidazole from N(2)-formyl-N(1)-(5-phospho-D-ribosyl)glycinamide: step 2/2.</text>
</comment>
<comment type="subcellular location">
    <subcellularLocation>
        <location evidence="1">Cytoplasm</location>
    </subcellularLocation>
</comment>
<comment type="similarity">
    <text evidence="1">Belongs to the AIR synthase family.</text>
</comment>
<gene>
    <name evidence="1" type="primary">purM</name>
    <name type="ordered locus">MmarC7_0500</name>
</gene>
<proteinExistence type="inferred from homology"/>
<accession>A6VGJ3</accession>
<organism>
    <name type="scientific">Methanococcus maripaludis (strain C7 / ATCC BAA-1331)</name>
    <dbReference type="NCBI Taxonomy" id="426368"/>
    <lineage>
        <taxon>Archaea</taxon>
        <taxon>Methanobacteriati</taxon>
        <taxon>Methanobacteriota</taxon>
        <taxon>Methanomada group</taxon>
        <taxon>Methanococci</taxon>
        <taxon>Methanococcales</taxon>
        <taxon>Methanococcaceae</taxon>
        <taxon>Methanococcus</taxon>
    </lineage>
</organism>
<protein>
    <recommendedName>
        <fullName evidence="1">Phosphoribosylformylglycinamidine cyclo-ligase</fullName>
        <ecNumber evidence="1">6.3.3.1</ecNumber>
    </recommendedName>
    <alternativeName>
        <fullName evidence="1">AIR synthase</fullName>
    </alternativeName>
    <alternativeName>
        <fullName evidence="1">AIRS</fullName>
    </alternativeName>
    <alternativeName>
        <fullName evidence="1">Phosphoribosyl-aminoimidazole synthetase</fullName>
    </alternativeName>
</protein>
<sequence>MVTYKDAGVDIYKEDKVIRALASQIKFERTDAIKPADLKGHYAGAIEFGDYYLVLCTDGVGSKMVVAEMANKFDTVPIDMIAMNVNDAICIGAEPVALVDYMAVEDITEDIASQIGKGLNDGIKESNINLIGGETASLPNMIKGVDLAGTVLAVVKKDEIVSGKEVKPGNVIVGLRSSGIHSNGLSLARKVFFEISNLDVKSKLSHGKTVAEELLTPTKIYVKPVLEMIKQVNVKGLAHITGGGFRKLKRLNKDVCYKIDELPEILPIFKEIQNLGNVADQEMFKTFNMGIGFCVIVEKDDAEKIIEISNHHNIAAFVIGKIEESVEVNGETKRETVLVEYNNKKMIME</sequence>
<dbReference type="EC" id="6.3.3.1" evidence="1"/>
<dbReference type="EMBL" id="CP000745">
    <property type="protein sequence ID" value="ABR65569.1"/>
    <property type="molecule type" value="Genomic_DNA"/>
</dbReference>
<dbReference type="SMR" id="A6VGJ3"/>
<dbReference type="STRING" id="426368.MmarC7_0500"/>
<dbReference type="KEGG" id="mmz:MmarC7_0500"/>
<dbReference type="eggNOG" id="arCOG00639">
    <property type="taxonomic scope" value="Archaea"/>
</dbReference>
<dbReference type="HOGENOM" id="CLU_047116_0_0_2"/>
<dbReference type="OrthoDB" id="6605at2157"/>
<dbReference type="UniPathway" id="UPA00074">
    <property type="reaction ID" value="UER00129"/>
</dbReference>
<dbReference type="GO" id="GO:0005829">
    <property type="term" value="C:cytosol"/>
    <property type="evidence" value="ECO:0007669"/>
    <property type="project" value="TreeGrafter"/>
</dbReference>
<dbReference type="GO" id="GO:0005524">
    <property type="term" value="F:ATP binding"/>
    <property type="evidence" value="ECO:0007669"/>
    <property type="project" value="UniProtKB-KW"/>
</dbReference>
<dbReference type="GO" id="GO:0004637">
    <property type="term" value="F:phosphoribosylamine-glycine ligase activity"/>
    <property type="evidence" value="ECO:0007669"/>
    <property type="project" value="TreeGrafter"/>
</dbReference>
<dbReference type="GO" id="GO:0004641">
    <property type="term" value="F:phosphoribosylformylglycinamidine cyclo-ligase activity"/>
    <property type="evidence" value="ECO:0007669"/>
    <property type="project" value="UniProtKB-UniRule"/>
</dbReference>
<dbReference type="GO" id="GO:0006189">
    <property type="term" value="P:'de novo' IMP biosynthetic process"/>
    <property type="evidence" value="ECO:0007669"/>
    <property type="project" value="UniProtKB-UniRule"/>
</dbReference>
<dbReference type="GO" id="GO:0046084">
    <property type="term" value="P:adenine biosynthetic process"/>
    <property type="evidence" value="ECO:0007669"/>
    <property type="project" value="TreeGrafter"/>
</dbReference>
<dbReference type="CDD" id="cd02196">
    <property type="entry name" value="PurM"/>
    <property type="match status" value="1"/>
</dbReference>
<dbReference type="FunFam" id="3.30.1330.10:FF:000020">
    <property type="entry name" value="Phosphoribosylformylglycinamidine cyclo-ligase"/>
    <property type="match status" value="1"/>
</dbReference>
<dbReference type="FunFam" id="3.90.650.10:FF:000011">
    <property type="entry name" value="Phosphoribosylformylglycinamidine cyclo-ligase"/>
    <property type="match status" value="1"/>
</dbReference>
<dbReference type="Gene3D" id="3.90.650.10">
    <property type="entry name" value="PurM-like C-terminal domain"/>
    <property type="match status" value="1"/>
</dbReference>
<dbReference type="Gene3D" id="3.30.1330.10">
    <property type="entry name" value="PurM-like, N-terminal domain"/>
    <property type="match status" value="1"/>
</dbReference>
<dbReference type="HAMAP" id="MF_00741">
    <property type="entry name" value="AIRS"/>
    <property type="match status" value="1"/>
</dbReference>
<dbReference type="InterPro" id="IPR010918">
    <property type="entry name" value="PurM-like_C_dom"/>
</dbReference>
<dbReference type="InterPro" id="IPR036676">
    <property type="entry name" value="PurM-like_C_sf"/>
</dbReference>
<dbReference type="InterPro" id="IPR016188">
    <property type="entry name" value="PurM-like_N"/>
</dbReference>
<dbReference type="InterPro" id="IPR036921">
    <property type="entry name" value="PurM-like_N_sf"/>
</dbReference>
<dbReference type="InterPro" id="IPR004733">
    <property type="entry name" value="PurM_cligase"/>
</dbReference>
<dbReference type="NCBIfam" id="TIGR00878">
    <property type="entry name" value="purM"/>
    <property type="match status" value="1"/>
</dbReference>
<dbReference type="PANTHER" id="PTHR10520:SF12">
    <property type="entry name" value="TRIFUNCTIONAL PURINE BIOSYNTHETIC PROTEIN ADENOSINE-3"/>
    <property type="match status" value="1"/>
</dbReference>
<dbReference type="PANTHER" id="PTHR10520">
    <property type="entry name" value="TRIFUNCTIONAL PURINE BIOSYNTHETIC PROTEIN ADENOSINE-3-RELATED"/>
    <property type="match status" value="1"/>
</dbReference>
<dbReference type="Pfam" id="PF00586">
    <property type="entry name" value="AIRS"/>
    <property type="match status" value="1"/>
</dbReference>
<dbReference type="Pfam" id="PF02769">
    <property type="entry name" value="AIRS_C"/>
    <property type="match status" value="1"/>
</dbReference>
<dbReference type="SUPFAM" id="SSF56042">
    <property type="entry name" value="PurM C-terminal domain-like"/>
    <property type="match status" value="1"/>
</dbReference>
<dbReference type="SUPFAM" id="SSF55326">
    <property type="entry name" value="PurM N-terminal domain-like"/>
    <property type="match status" value="1"/>
</dbReference>